<name>ELFA_ECO57</name>
<organism>
    <name type="scientific">Escherichia coli O157:H7</name>
    <dbReference type="NCBI Taxonomy" id="83334"/>
    <lineage>
        <taxon>Bacteria</taxon>
        <taxon>Pseudomonadati</taxon>
        <taxon>Pseudomonadota</taxon>
        <taxon>Gammaproteobacteria</taxon>
        <taxon>Enterobacterales</taxon>
        <taxon>Enterobacteriaceae</taxon>
        <taxon>Escherichia</taxon>
    </lineage>
</organism>
<gene>
    <name type="primary">elfA</name>
    <name type="synonym">ycbQ</name>
    <name type="ordered locus">ECs1021</name>
    <name type="ordered locus">Z1286</name>
</gene>
<accession>Q8X582</accession>
<accession>Q7AG44</accession>
<feature type="signal peptide" evidence="1">
    <location>
        <begin position="1"/>
        <end position="21"/>
    </location>
</feature>
<feature type="chain" id="PRO_0000413217" description="Laminin-binding fimbrial subunit ElfA">
    <location>
        <begin position="22"/>
        <end position="179"/>
    </location>
</feature>
<reference key="1">
    <citation type="journal article" date="2001" name="Nature">
        <title>Genome sequence of enterohaemorrhagic Escherichia coli O157:H7.</title>
        <authorList>
            <person name="Perna N.T."/>
            <person name="Plunkett G. III"/>
            <person name="Burland V."/>
            <person name="Mau B."/>
            <person name="Glasner J.D."/>
            <person name="Rose D.J."/>
            <person name="Mayhew G.F."/>
            <person name="Evans P.S."/>
            <person name="Gregor J."/>
            <person name="Kirkpatrick H.A."/>
            <person name="Posfai G."/>
            <person name="Hackett J."/>
            <person name="Klink S."/>
            <person name="Boutin A."/>
            <person name="Shao Y."/>
            <person name="Miller L."/>
            <person name="Grotbeck E.J."/>
            <person name="Davis N.W."/>
            <person name="Lim A."/>
            <person name="Dimalanta E.T."/>
            <person name="Potamousis K."/>
            <person name="Apodaca J."/>
            <person name="Anantharaman T.S."/>
            <person name="Lin J."/>
            <person name="Yen G."/>
            <person name="Schwartz D.C."/>
            <person name="Welch R.A."/>
            <person name="Blattner F.R."/>
        </authorList>
    </citation>
    <scope>NUCLEOTIDE SEQUENCE [LARGE SCALE GENOMIC DNA]</scope>
    <source>
        <strain>O157:H7 / EDL933 / ATCC 700927 / EHEC</strain>
    </source>
</reference>
<reference key="2">
    <citation type="journal article" date="2001" name="DNA Res.">
        <title>Complete genome sequence of enterohemorrhagic Escherichia coli O157:H7 and genomic comparison with a laboratory strain K-12.</title>
        <authorList>
            <person name="Hayashi T."/>
            <person name="Makino K."/>
            <person name="Ohnishi M."/>
            <person name="Kurokawa K."/>
            <person name="Ishii K."/>
            <person name="Yokoyama K."/>
            <person name="Han C.-G."/>
            <person name="Ohtsubo E."/>
            <person name="Nakayama K."/>
            <person name="Murata T."/>
            <person name="Tanaka M."/>
            <person name="Tobe T."/>
            <person name="Iida T."/>
            <person name="Takami H."/>
            <person name="Honda T."/>
            <person name="Sasakawa C."/>
            <person name="Ogasawara N."/>
            <person name="Yasunaga T."/>
            <person name="Kuhara S."/>
            <person name="Shiba T."/>
            <person name="Hattori M."/>
            <person name="Shinagawa H."/>
        </authorList>
    </citation>
    <scope>NUCLEOTIDE SEQUENCE [LARGE SCALE GENOMIC DNA]</scope>
    <source>
        <strain>O157:H7 / Sakai / RIMD 0509952 / EHEC</strain>
    </source>
</reference>
<reference key="3">
    <citation type="journal article" date="2009" name="Environ. Microbiol.">
        <title>The Escherichia coli ycbQRST operon encodes fimbriae with laminin-binding and epithelial cell adherence properties in Shiga-toxigenic E.coli O157:H7.</title>
        <authorList>
            <person name="Samadder P."/>
            <person name="Xicohtencatl-Cortes J."/>
            <person name="Saldana Z."/>
            <person name="Jordan D."/>
            <person name="Tarr P.I."/>
            <person name="Kaper J.B."/>
            <person name="Giron J.A."/>
        </authorList>
    </citation>
    <scope>FUNCTION</scope>
    <scope>LAMININ-BINDING</scope>
    <scope>SUBCELLULAR LOCATION</scope>
    <scope>INDUCTION</scope>
    <scope>DISRUPTION PHENOTYPE</scope>
    <scope>GENE NAME</scope>
    <source>
        <strain>O157:H7 / EDL933 / ATCC 700927 / EHEC</strain>
    </source>
</reference>
<sequence length="179" mass="18695">MKKSVLTAFITVVCATSSVMAADDNAITDGSVTFNGKVIAPACTLVAATKDSVVTLPDVSATKLQTNGQVSGVQTDVPIELKDCDTTVTKNATFTFNGTADTTQITAFANQASSDAATNVALQMYMNDGTTAIKPDTETGNILLQDGDQTLTFKVDYIATGKATSGNVNAVTNFHINYY</sequence>
<dbReference type="EMBL" id="AE005174">
    <property type="protein sequence ID" value="AAG55423.1"/>
    <property type="status" value="ALT_INIT"/>
    <property type="molecule type" value="Genomic_DNA"/>
</dbReference>
<dbReference type="EMBL" id="BA000007">
    <property type="protein sequence ID" value="BAB34444.2"/>
    <property type="molecule type" value="Genomic_DNA"/>
</dbReference>
<dbReference type="PIR" id="C85620">
    <property type="entry name" value="C85620"/>
</dbReference>
<dbReference type="PIR" id="E90756">
    <property type="entry name" value="E90756"/>
</dbReference>
<dbReference type="RefSeq" id="NP_309048.2">
    <property type="nucleotide sequence ID" value="NC_002695.1"/>
</dbReference>
<dbReference type="RefSeq" id="WP_000750295.1">
    <property type="nucleotide sequence ID" value="NZ_VOAI01000006.1"/>
</dbReference>
<dbReference type="SMR" id="Q8X582"/>
<dbReference type="STRING" id="155864.Z1286"/>
<dbReference type="GeneID" id="917768"/>
<dbReference type="KEGG" id="ece:Z1286"/>
<dbReference type="KEGG" id="ecs:ECs_1021"/>
<dbReference type="PATRIC" id="fig|386585.9.peg.1143"/>
<dbReference type="eggNOG" id="COG3539">
    <property type="taxonomic scope" value="Bacteria"/>
</dbReference>
<dbReference type="HOGENOM" id="CLU_088965_0_0_6"/>
<dbReference type="OMA" id="FVATANF"/>
<dbReference type="Proteomes" id="UP000000558">
    <property type="component" value="Chromosome"/>
</dbReference>
<dbReference type="Proteomes" id="UP000002519">
    <property type="component" value="Chromosome"/>
</dbReference>
<dbReference type="GO" id="GO:0009289">
    <property type="term" value="C:pilus"/>
    <property type="evidence" value="ECO:0007669"/>
    <property type="project" value="UniProtKB-SubCell"/>
</dbReference>
<dbReference type="GO" id="GO:0043709">
    <property type="term" value="P:cell adhesion involved in single-species biofilm formation"/>
    <property type="evidence" value="ECO:0007669"/>
    <property type="project" value="TreeGrafter"/>
</dbReference>
<dbReference type="Gene3D" id="2.60.40.1090">
    <property type="entry name" value="Fimbrial-type adhesion domain"/>
    <property type="match status" value="1"/>
</dbReference>
<dbReference type="InterPro" id="IPR000259">
    <property type="entry name" value="Adhesion_dom_fimbrial"/>
</dbReference>
<dbReference type="InterPro" id="IPR036937">
    <property type="entry name" value="Adhesion_dom_fimbrial_sf"/>
</dbReference>
<dbReference type="InterPro" id="IPR008966">
    <property type="entry name" value="Adhesion_dom_sf"/>
</dbReference>
<dbReference type="InterPro" id="IPR050263">
    <property type="entry name" value="Bact_Fimbrial_Adh_Pro"/>
</dbReference>
<dbReference type="PANTHER" id="PTHR33420:SF3">
    <property type="entry name" value="FIMBRIAL SUBUNIT ELFA"/>
    <property type="match status" value="1"/>
</dbReference>
<dbReference type="PANTHER" id="PTHR33420">
    <property type="entry name" value="FIMBRIAL SUBUNIT ELFA-RELATED"/>
    <property type="match status" value="1"/>
</dbReference>
<dbReference type="Pfam" id="PF00419">
    <property type="entry name" value="Fimbrial"/>
    <property type="match status" value="1"/>
</dbReference>
<dbReference type="SUPFAM" id="SSF49401">
    <property type="entry name" value="Bacterial adhesins"/>
    <property type="match status" value="1"/>
</dbReference>
<comment type="function">
    <text evidence="2">Part of the elfADCG fimbrial operon, which could be required for adherence to host epithelial cells. ElfA is an accessory colonization factor that contributes to adherence of bacteria to human intestinal epithelial cells and to animal intestinal tissue in vitro. Binds specifically to laminin, but not to fibronectin or collagen type IV.</text>
</comment>
<comment type="subcellular location">
    <subcellularLocation>
        <location evidence="2">Fimbrium</location>
    </subcellularLocation>
</comment>
<comment type="induction">
    <text evidence="2">Induced in the presence of epithelial cells.</text>
</comment>
<comment type="disruption phenotype">
    <text evidence="2">Mutants show significant reduction in adherence to several cultured epithelial cells (HEp-2, HT-29 and MDBK).</text>
</comment>
<comment type="similarity">
    <text evidence="3">Belongs to the fimbrial protein family.</text>
</comment>
<comment type="sequence caution" evidence="3">
    <conflict type="erroneous initiation">
        <sequence resource="EMBL-CDS" id="AAG55423"/>
    </conflict>
    <text>Extended N-terminus.</text>
</comment>
<keyword id="KW-0281">Fimbrium</keyword>
<keyword id="KW-1185">Reference proteome</keyword>
<keyword id="KW-0732">Signal</keyword>
<protein>
    <recommendedName>
        <fullName>Laminin-binding fimbrial subunit ElfA</fullName>
    </recommendedName>
    <alternativeName>
        <fullName>ELF</fullName>
    </alternativeName>
</protein>
<evidence type="ECO:0000255" key="1"/>
<evidence type="ECO:0000269" key="2">
    <source>
    </source>
</evidence>
<evidence type="ECO:0000305" key="3"/>
<proteinExistence type="evidence at protein level"/>